<name>SOLI_RALSL</name>
<dbReference type="EC" id="2.3.1.184"/>
<dbReference type="EMBL" id="AF021840">
    <property type="protein sequence ID" value="AAC45948.1"/>
    <property type="molecule type" value="Genomic_DNA"/>
</dbReference>
<dbReference type="SMR" id="O30920"/>
<dbReference type="GO" id="GO:0061579">
    <property type="term" value="F:N-acyl homoserine lactone synthase activity"/>
    <property type="evidence" value="ECO:0007669"/>
    <property type="project" value="UniProtKB-EC"/>
</dbReference>
<dbReference type="GO" id="GO:0009372">
    <property type="term" value="P:quorum sensing"/>
    <property type="evidence" value="ECO:0007669"/>
    <property type="project" value="UniProtKB-KW"/>
</dbReference>
<dbReference type="GO" id="GO:0007165">
    <property type="term" value="P:signal transduction"/>
    <property type="evidence" value="ECO:0007669"/>
    <property type="project" value="TreeGrafter"/>
</dbReference>
<dbReference type="Gene3D" id="3.40.630.30">
    <property type="match status" value="1"/>
</dbReference>
<dbReference type="InterPro" id="IPR016181">
    <property type="entry name" value="Acyl_CoA_acyltransferase"/>
</dbReference>
<dbReference type="InterPro" id="IPR018311">
    <property type="entry name" value="Autoind_synth_CS"/>
</dbReference>
<dbReference type="InterPro" id="IPR001690">
    <property type="entry name" value="Autoind_synthase"/>
</dbReference>
<dbReference type="PANTHER" id="PTHR39322">
    <property type="entry name" value="ACYL-HOMOSERINE-LACTONE SYNTHASE"/>
    <property type="match status" value="1"/>
</dbReference>
<dbReference type="PANTHER" id="PTHR39322:SF1">
    <property type="entry name" value="ISOVALERYL-HOMOSERINE LACTONE SYNTHASE"/>
    <property type="match status" value="1"/>
</dbReference>
<dbReference type="Pfam" id="PF00765">
    <property type="entry name" value="Autoind_synth"/>
    <property type="match status" value="1"/>
</dbReference>
<dbReference type="PRINTS" id="PR01549">
    <property type="entry name" value="AUTOINDCRSYN"/>
</dbReference>
<dbReference type="SUPFAM" id="SSF55729">
    <property type="entry name" value="Acyl-CoA N-acyltransferases (Nat)"/>
    <property type="match status" value="1"/>
</dbReference>
<dbReference type="PROSITE" id="PS00949">
    <property type="entry name" value="AUTOINDUCER_SYNTH_1"/>
    <property type="match status" value="1"/>
</dbReference>
<dbReference type="PROSITE" id="PS51187">
    <property type="entry name" value="AUTOINDUCER_SYNTH_2"/>
    <property type="match status" value="1"/>
</dbReference>
<protein>
    <recommendedName>
        <fullName>Acyl-homoserine-lactone synthase</fullName>
        <ecNumber>2.3.1.184</ecNumber>
    </recommendedName>
    <alternativeName>
        <fullName>Autoinducer synthesis protein SolI</fullName>
    </alternativeName>
</protein>
<reference key="1">
    <citation type="journal article" date="1997" name="J. Bacteriol.">
        <title>Hierarchical autoinduction in Ralstonia solanacearum: control of acyl-homoserine lactone production by a novel autoregulatory system responsive to 3-hydroxypalmitic acid methyl ester.</title>
        <authorList>
            <person name="Flavier A.B."/>
            <person name="Ganova-Raeva L.M."/>
            <person name="Schell M.A."/>
            <person name="Denny T.P."/>
        </authorList>
    </citation>
    <scope>NUCLEOTIDE SEQUENCE [GENOMIC DNA]</scope>
    <source>
        <strain>AW1</strain>
    </source>
</reference>
<gene>
    <name type="primary">solI</name>
</gene>
<organism>
    <name type="scientific">Ralstonia solanacearum</name>
    <name type="common">Pseudomonas solanacearum</name>
    <dbReference type="NCBI Taxonomy" id="305"/>
    <lineage>
        <taxon>Bacteria</taxon>
        <taxon>Pseudomonadati</taxon>
        <taxon>Pseudomonadota</taxon>
        <taxon>Betaproteobacteria</taxon>
        <taxon>Burkholderiales</taxon>
        <taxon>Burkholderiaceae</taxon>
        <taxon>Ralstonia</taxon>
        <taxon>Ralstonia solanacearum species complex</taxon>
    </lineage>
</organism>
<proteinExistence type="inferred from homology"/>
<evidence type="ECO:0000255" key="1">
    <source>
        <dbReference type="PROSITE-ProRule" id="PRU00533"/>
    </source>
</evidence>
<keyword id="KW-0071">Autoinducer synthesis</keyword>
<keyword id="KW-0673">Quorum sensing</keyword>
<keyword id="KW-0949">S-adenosyl-L-methionine</keyword>
<keyword id="KW-0808">Transferase</keyword>
<comment type="function">
    <text>Required for the synthesis of acyl-HSL autoinducers that bind to SolR.</text>
</comment>
<comment type="catalytic activity">
    <reaction>
        <text>a fatty acyl-[ACP] + S-adenosyl-L-methionine = an N-acyl-L-homoserine lactone + S-methyl-5'-thioadenosine + holo-[ACP] + H(+)</text>
        <dbReference type="Rhea" id="RHEA:10096"/>
        <dbReference type="Rhea" id="RHEA-COMP:9685"/>
        <dbReference type="Rhea" id="RHEA-COMP:14125"/>
        <dbReference type="ChEBI" id="CHEBI:15378"/>
        <dbReference type="ChEBI" id="CHEBI:17509"/>
        <dbReference type="ChEBI" id="CHEBI:55474"/>
        <dbReference type="ChEBI" id="CHEBI:59789"/>
        <dbReference type="ChEBI" id="CHEBI:64479"/>
        <dbReference type="ChEBI" id="CHEBI:138651"/>
        <dbReference type="EC" id="2.3.1.184"/>
    </reaction>
</comment>
<comment type="similarity">
    <text evidence="1">Belongs to the autoinducer synthase family.</text>
</comment>
<accession>O30920</accession>
<feature type="chain" id="PRO_0000210896" description="Acyl-homoserine-lactone synthase">
    <location>
        <begin position="1"/>
        <end position="204"/>
    </location>
</feature>
<sequence>MRTFVHGGGRLPEGIDAALAHYRHQVFVGRLGWQLPMADGTFERDQYDRDDTVYVVARDEGGTICGCARLLPTTRPYLLKDVFASLLMHGMPPPESPEVWELSRFAARSGAPCPRSGRADWAVRPMLASVVQCAAQRGARRLIGATFVSMVRLFRRIGVRAHRAGPVRCIGGRPVVACWIDIDASTCAALGIPSASAAPGPVLQ</sequence>